<keyword id="KW-0009">Actin-binding</keyword>
<keyword id="KW-0106">Calcium</keyword>
<keyword id="KW-1003">Cell membrane</keyword>
<keyword id="KW-0175">Coiled coil</keyword>
<keyword id="KW-0963">Cytoplasm</keyword>
<keyword id="KW-0206">Cytoskeleton</keyword>
<keyword id="KW-0254">Endocytosis</keyword>
<keyword id="KW-0967">Endosome</keyword>
<keyword id="KW-0472">Membrane</keyword>
<keyword id="KW-0479">Metal-binding</keyword>
<keyword id="KW-1185">Reference proteome</keyword>
<keyword id="KW-0677">Repeat</keyword>
<organism>
    <name type="scientific">Candida albicans (strain SC5314 / ATCC MYA-2876)</name>
    <name type="common">Yeast</name>
    <dbReference type="NCBI Taxonomy" id="237561"/>
    <lineage>
        <taxon>Eukaryota</taxon>
        <taxon>Fungi</taxon>
        <taxon>Dikarya</taxon>
        <taxon>Ascomycota</taxon>
        <taxon>Saccharomycotina</taxon>
        <taxon>Pichiomycetes</taxon>
        <taxon>Debaryomycetaceae</taxon>
        <taxon>Candida/Lodderomyces clade</taxon>
        <taxon>Candida</taxon>
    </lineage>
</organism>
<reference key="1">
    <citation type="journal article" date="2004" name="Proc. Natl. Acad. Sci. U.S.A.">
        <title>The diploid genome sequence of Candida albicans.</title>
        <authorList>
            <person name="Jones T."/>
            <person name="Federspiel N.A."/>
            <person name="Chibana H."/>
            <person name="Dungan J."/>
            <person name="Kalman S."/>
            <person name="Magee B.B."/>
            <person name="Newport G."/>
            <person name="Thorstenson Y.R."/>
            <person name="Agabian N."/>
            <person name="Magee P.T."/>
            <person name="Davis R.W."/>
            <person name="Scherer S."/>
        </authorList>
    </citation>
    <scope>NUCLEOTIDE SEQUENCE [LARGE SCALE GENOMIC DNA]</scope>
    <source>
        <strain>SC5314 / ATCC MYA-2876</strain>
    </source>
</reference>
<reference key="2">
    <citation type="journal article" date="2007" name="Genome Biol.">
        <title>Assembly of the Candida albicans genome into sixteen supercontigs aligned on the eight chromosomes.</title>
        <authorList>
            <person name="van het Hoog M."/>
            <person name="Rast T.J."/>
            <person name="Martchenko M."/>
            <person name="Grindle S."/>
            <person name="Dignard D."/>
            <person name="Hogues H."/>
            <person name="Cuomo C."/>
            <person name="Berriman M."/>
            <person name="Scherer S."/>
            <person name="Magee B.B."/>
            <person name="Whiteway M."/>
            <person name="Chibana H."/>
            <person name="Nantel A."/>
            <person name="Magee P.T."/>
        </authorList>
    </citation>
    <scope>GENOME REANNOTATION</scope>
    <source>
        <strain>SC5314 / ATCC MYA-2876</strain>
    </source>
</reference>
<reference key="3">
    <citation type="journal article" date="2013" name="Genome Biol.">
        <title>Assembly of a phased diploid Candida albicans genome facilitates allele-specific measurements and provides a simple model for repeat and indel structure.</title>
        <authorList>
            <person name="Muzzey D."/>
            <person name="Schwartz K."/>
            <person name="Weissman J.S."/>
            <person name="Sherlock G."/>
        </authorList>
    </citation>
    <scope>NUCLEOTIDE SEQUENCE [LARGE SCALE GENOMIC DNA]</scope>
    <scope>GENOME REANNOTATION</scope>
    <source>
        <strain>SC5314 / ATCC MYA-2876</strain>
    </source>
</reference>
<reference key="4">
    <citation type="journal article" date="2004" name="Proteomics">
        <title>Proteomic response to amino acid starvation in Candida albicans and Saccharomyces cerevisiae.</title>
        <authorList>
            <person name="Yin Z."/>
            <person name="Stead D."/>
            <person name="Selway L."/>
            <person name="Walker J."/>
            <person name="Riba-Garcia I."/>
            <person name="McLnerney T."/>
            <person name="Gaskell S."/>
            <person name="Oliver S.G."/>
            <person name="Cash P."/>
            <person name="Brown A.J."/>
        </authorList>
    </citation>
    <scope>INDUCTION</scope>
</reference>
<comment type="function">
    <text evidence="1">Component of the PAN1 actin cytoskeleton-regulatory complex required for the internalization of endosomes during actin-coupled endocytosis. The complex links the site of endocytosis to the cell membrane-associated actin cytoskeleton. Mediates uptake of external molecules and vacuolar degradation of plasma membrane proteins. Plays a role in the proper organization of the cell membrane-associated actin cytoskeleton and promotes its destabilization (By similarity).</text>
</comment>
<comment type="subunit">
    <text evidence="1">Component of the PAN1 actin cytoskeleton-regulatory complex.</text>
</comment>
<comment type="subcellular location">
    <subcellularLocation>
        <location evidence="1">Cell membrane</location>
        <topology evidence="1">Peripheral membrane protein</topology>
        <orientation evidence="1">Cytoplasmic side</orientation>
    </subcellularLocation>
    <subcellularLocation>
        <location evidence="1">Endosome membrane</location>
        <topology evidence="1">Peripheral membrane protein</topology>
        <orientation evidence="1">Cytoplasmic side</orientation>
    </subcellularLocation>
    <subcellularLocation>
        <location evidence="1">Cytoplasm</location>
        <location evidence="1">Cytoskeleton</location>
        <location evidence="1">Actin patch</location>
    </subcellularLocation>
    <text evidence="1">Cytoplasmic and cortical actin patches.</text>
</comment>
<comment type="induction">
    <text evidence="6">Regulated by GCN4 and induced in response to amino acid starvation.</text>
</comment>
<comment type="similarity">
    <text evidence="7">Belongs to the END3 family.</text>
</comment>
<gene>
    <name type="primary">END3</name>
    <name type="ordered locus">CAALFM_C301400WA</name>
    <name type="ORF">CaO19.1711</name>
    <name type="ORF">CaO19.9278</name>
</gene>
<protein>
    <recommendedName>
        <fullName>Actin cytoskeleton-regulatory complex protein END3</fullName>
    </recommendedName>
    <alternativeName>
        <fullName>Endocytosis protein 3</fullName>
    </alternativeName>
</protein>
<proteinExistence type="evidence at transcript level"/>
<name>END3_CANAL</name>
<sequence>MPRLEESEIKKYWQIFQSLKPQNNKLTGDQLSSILKNSQLPQQQLSAIWELSDIDNDGKLDFEEFCIIMRLIFDVINGKLPNVPQELPSWLIPASKSAIIQANKAVNQGNNNFGDIDDDEDDKLSNDFDWYISPTDKSIYEKIYDSKCDSFGRIKYSSLNELYNGLTNVPSSEISSAWNLINPKSFETIDKDQTLVFLHILNQRENGKRIPRGVPASLRATFSKEVPNYDLSAQAKPSISATTETGKKSFAENYLNKIGGGVGASSTINNGRNEKGTDFSATQGTDWEEVRLRRELQDLERLLDKVQNDTKNQKDNSNNNQDNNDMLIKYEFEQLLKYKQNQLNSTTNASKNSTDLSSVKQDIEEIQNQVNTLQEFLTTKNQELLKLNQQIESLK</sequence>
<accession>Q5AJ82</accession>
<accession>A0A1D8PJ48</accession>
<feature type="chain" id="PRO_0000349443" description="Actin cytoskeleton-regulatory complex protein END3">
    <location>
        <begin position="1"/>
        <end position="395"/>
    </location>
</feature>
<feature type="domain" description="EH 1" evidence="3">
    <location>
        <begin position="8"/>
        <end position="98"/>
    </location>
</feature>
<feature type="domain" description="EF-hand" evidence="4">
    <location>
        <begin position="40"/>
        <end position="75"/>
    </location>
</feature>
<feature type="domain" description="EH 2" evidence="3">
    <location>
        <begin position="136"/>
        <end position="225"/>
    </location>
</feature>
<feature type="region of interest" description="Disordered" evidence="5">
    <location>
        <begin position="305"/>
        <end position="325"/>
    </location>
</feature>
<feature type="coiled-coil region" evidence="2">
    <location>
        <begin position="285"/>
        <end position="395"/>
    </location>
</feature>
<feature type="compositionally biased region" description="Basic and acidic residues" evidence="5">
    <location>
        <begin position="305"/>
        <end position="314"/>
    </location>
</feature>
<feature type="compositionally biased region" description="Low complexity" evidence="5">
    <location>
        <begin position="315"/>
        <end position="325"/>
    </location>
</feature>
<feature type="binding site" evidence="4">
    <location>
        <position position="53"/>
    </location>
    <ligand>
        <name>Ca(2+)</name>
        <dbReference type="ChEBI" id="CHEBI:29108"/>
    </ligand>
</feature>
<feature type="binding site" evidence="4">
    <location>
        <position position="55"/>
    </location>
    <ligand>
        <name>Ca(2+)</name>
        <dbReference type="ChEBI" id="CHEBI:29108"/>
    </ligand>
</feature>
<feature type="binding site" evidence="4">
    <location>
        <position position="57"/>
    </location>
    <ligand>
        <name>Ca(2+)</name>
        <dbReference type="ChEBI" id="CHEBI:29108"/>
    </ligand>
</feature>
<feature type="binding site" evidence="4">
    <location>
        <position position="59"/>
    </location>
    <ligand>
        <name>Ca(2+)</name>
        <dbReference type="ChEBI" id="CHEBI:29108"/>
    </ligand>
</feature>
<feature type="binding site" evidence="4">
    <location>
        <position position="64"/>
    </location>
    <ligand>
        <name>Ca(2+)</name>
        <dbReference type="ChEBI" id="CHEBI:29108"/>
    </ligand>
</feature>
<dbReference type="EMBL" id="CP017625">
    <property type="protein sequence ID" value="AOW28182.1"/>
    <property type="molecule type" value="Genomic_DNA"/>
</dbReference>
<dbReference type="RefSeq" id="XP_721782.1">
    <property type="nucleotide sequence ID" value="XM_716689.1"/>
</dbReference>
<dbReference type="FunCoup" id="Q5AJ82">
    <property type="interactions" value="134"/>
</dbReference>
<dbReference type="STRING" id="237561.Q5AJ82"/>
<dbReference type="EnsemblFungi" id="C3_01400W_A-T">
    <property type="protein sequence ID" value="C3_01400W_A-T-p1"/>
    <property type="gene ID" value="C3_01400W_A"/>
</dbReference>
<dbReference type="GeneID" id="3636644"/>
<dbReference type="KEGG" id="cal:CAALFM_C301400WA"/>
<dbReference type="CGD" id="CAL0000174035">
    <property type="gene designation" value="END3"/>
</dbReference>
<dbReference type="VEuPathDB" id="FungiDB:C3_01400W_A"/>
<dbReference type="eggNOG" id="KOG0998">
    <property type="taxonomic scope" value="Eukaryota"/>
</dbReference>
<dbReference type="HOGENOM" id="CLU_040829_0_0_1"/>
<dbReference type="InParanoid" id="Q5AJ82"/>
<dbReference type="OMA" id="DWLIPES"/>
<dbReference type="OrthoDB" id="1716625at2759"/>
<dbReference type="PHI-base" id="PHI:123071"/>
<dbReference type="PRO" id="PR:Q5AJ82"/>
<dbReference type="Proteomes" id="UP000000559">
    <property type="component" value="Chromosome 3"/>
</dbReference>
<dbReference type="GO" id="GO:0030479">
    <property type="term" value="C:actin cortical patch"/>
    <property type="evidence" value="ECO:0007669"/>
    <property type="project" value="UniProtKB-SubCell"/>
</dbReference>
<dbReference type="GO" id="GO:1990964">
    <property type="term" value="C:actin cytoskeleton-regulatory complex"/>
    <property type="evidence" value="ECO:0007669"/>
    <property type="project" value="EnsemblFungi"/>
</dbReference>
<dbReference type="GO" id="GO:0005737">
    <property type="term" value="C:cytoplasm"/>
    <property type="evidence" value="ECO:0000318"/>
    <property type="project" value="GO_Central"/>
</dbReference>
<dbReference type="GO" id="GO:0010008">
    <property type="term" value="C:endosome membrane"/>
    <property type="evidence" value="ECO:0007669"/>
    <property type="project" value="UniProtKB-SubCell"/>
</dbReference>
<dbReference type="GO" id="GO:0005886">
    <property type="term" value="C:plasma membrane"/>
    <property type="evidence" value="ECO:0000318"/>
    <property type="project" value="GO_Central"/>
</dbReference>
<dbReference type="GO" id="GO:0003779">
    <property type="term" value="F:actin binding"/>
    <property type="evidence" value="ECO:0007669"/>
    <property type="project" value="UniProtKB-KW"/>
</dbReference>
<dbReference type="GO" id="GO:0005509">
    <property type="term" value="F:calcium ion binding"/>
    <property type="evidence" value="ECO:0007669"/>
    <property type="project" value="InterPro"/>
</dbReference>
<dbReference type="GO" id="GO:0030674">
    <property type="term" value="F:protein-macromolecule adaptor activity"/>
    <property type="evidence" value="ECO:0007669"/>
    <property type="project" value="EnsemblFungi"/>
</dbReference>
<dbReference type="GO" id="GO:0007015">
    <property type="term" value="P:actin filament organization"/>
    <property type="evidence" value="ECO:0000315"/>
    <property type="project" value="CGD"/>
</dbReference>
<dbReference type="GO" id="GO:0030476">
    <property type="term" value="P:ascospore wall assembly"/>
    <property type="evidence" value="ECO:0007669"/>
    <property type="project" value="EnsemblFungi"/>
</dbReference>
<dbReference type="GO" id="GO:0006897">
    <property type="term" value="P:endocytosis"/>
    <property type="evidence" value="ECO:0000315"/>
    <property type="project" value="CGD"/>
</dbReference>
<dbReference type="GO" id="GO:0016197">
    <property type="term" value="P:endosomal transport"/>
    <property type="evidence" value="ECO:0000318"/>
    <property type="project" value="GO_Central"/>
</dbReference>
<dbReference type="GO" id="GO:0030447">
    <property type="term" value="P:filamentous growth"/>
    <property type="evidence" value="ECO:0000315"/>
    <property type="project" value="CGD"/>
</dbReference>
<dbReference type="GO" id="GO:0061709">
    <property type="term" value="P:reticulophagy"/>
    <property type="evidence" value="ECO:0007669"/>
    <property type="project" value="EnsemblFungi"/>
</dbReference>
<dbReference type="CDD" id="cd00052">
    <property type="entry name" value="EH"/>
    <property type="match status" value="1"/>
</dbReference>
<dbReference type="Gene3D" id="1.10.238.10">
    <property type="entry name" value="EF-hand"/>
    <property type="match status" value="2"/>
</dbReference>
<dbReference type="InterPro" id="IPR011992">
    <property type="entry name" value="EF-hand-dom_pair"/>
</dbReference>
<dbReference type="InterPro" id="IPR018247">
    <property type="entry name" value="EF_Hand_1_Ca_BS"/>
</dbReference>
<dbReference type="InterPro" id="IPR002048">
    <property type="entry name" value="EF_hand_dom"/>
</dbReference>
<dbReference type="InterPro" id="IPR000261">
    <property type="entry name" value="EH_dom"/>
</dbReference>
<dbReference type="InterPro" id="IPR025604">
    <property type="entry name" value="End3"/>
</dbReference>
<dbReference type="PANTHER" id="PTHR11216">
    <property type="entry name" value="EH DOMAIN"/>
    <property type="match status" value="1"/>
</dbReference>
<dbReference type="Pfam" id="PF12763">
    <property type="entry name" value="EH"/>
    <property type="match status" value="1"/>
</dbReference>
<dbReference type="Pfam" id="PF12761">
    <property type="entry name" value="End3"/>
    <property type="match status" value="1"/>
</dbReference>
<dbReference type="SMART" id="SM00054">
    <property type="entry name" value="EFh"/>
    <property type="match status" value="1"/>
</dbReference>
<dbReference type="SMART" id="SM00027">
    <property type="entry name" value="EH"/>
    <property type="match status" value="2"/>
</dbReference>
<dbReference type="SUPFAM" id="SSF47473">
    <property type="entry name" value="EF-hand"/>
    <property type="match status" value="2"/>
</dbReference>
<dbReference type="PROSITE" id="PS00018">
    <property type="entry name" value="EF_HAND_1"/>
    <property type="match status" value="1"/>
</dbReference>
<dbReference type="PROSITE" id="PS50222">
    <property type="entry name" value="EF_HAND_2"/>
    <property type="match status" value="1"/>
</dbReference>
<dbReference type="PROSITE" id="PS50031">
    <property type="entry name" value="EH"/>
    <property type="match status" value="2"/>
</dbReference>
<evidence type="ECO:0000250" key="1"/>
<evidence type="ECO:0000255" key="2"/>
<evidence type="ECO:0000255" key="3">
    <source>
        <dbReference type="PROSITE-ProRule" id="PRU00077"/>
    </source>
</evidence>
<evidence type="ECO:0000255" key="4">
    <source>
        <dbReference type="PROSITE-ProRule" id="PRU00448"/>
    </source>
</evidence>
<evidence type="ECO:0000256" key="5">
    <source>
        <dbReference type="SAM" id="MobiDB-lite"/>
    </source>
</evidence>
<evidence type="ECO:0000269" key="6">
    <source>
    </source>
</evidence>
<evidence type="ECO:0000305" key="7"/>